<organism>
    <name type="scientific">Aspergillus fumigatus (strain ATCC MYA-4609 / CBS 101355 / FGSC A1100 / Af293)</name>
    <name type="common">Neosartorya fumigata</name>
    <dbReference type="NCBI Taxonomy" id="330879"/>
    <lineage>
        <taxon>Eukaryota</taxon>
        <taxon>Fungi</taxon>
        <taxon>Dikarya</taxon>
        <taxon>Ascomycota</taxon>
        <taxon>Pezizomycotina</taxon>
        <taxon>Eurotiomycetes</taxon>
        <taxon>Eurotiomycetidae</taxon>
        <taxon>Eurotiales</taxon>
        <taxon>Aspergillaceae</taxon>
        <taxon>Aspergillus</taxon>
        <taxon>Aspergillus subgen. Fumigati</taxon>
    </lineage>
</organism>
<comment type="function">
    <text evidence="1 2 3 5 6 7 8 9 10">Festuclavine dehydrogenase; part of the gene cluster that mediates the biosynthesis of fumiclavanine C, a fungal ergot alkaloid (PubMed:15933009, PubMed:22453123). DmaW catalyzes the first step of ergot alkaloid biosynthesis by condensing dimethylallyl diphosphate (DMAP) and tryptophan to form 4-dimethylallyl-L-tryptophan (PubMed:15870460). The second step is catalyzed by the methyltransferase easF that methylates 4-dimethylallyl-L-tryptophan in the presence of S-adenosyl-L-methionine, resulting in the formation of 4-dimethylallyl-L-abrine (By similarity). The catalase easC and the FAD-dependent oxidoreductase easE then transform 4-dimethylallyl-L-abrine to chanoclavine-I which is further oxidized by EasD in the presence of NAD(+), resulting in the formation of chanoclavine-I aldehyde (PubMed:20039019, PubMed:20526482, PubMed:21409592). EasA reduces chanoclavine-I aldehyde to dihydrochanoclavine-I aldehyde that spontaneously dehydrates to form 6,8-dimethyl-6,7-didehydroergoline (PubMed:20526482). EasG then catalyzes the reduction of 6,8-dimethyl-6,7-didehydroergoline to form festuclavine (PubMed:20526482). Hydrolysis of festuclavine by easM then leads to the formation of fumigaclavine B which is in turn acetylated by easN to fumigaclavine A (PubMed:26972831). Finally, easL catalyzes the conversion of fumigaclavine A into fumigaclavine C by attaching a dimethylallyl moiety to C-2 of the indole nucleus (PubMed:19672909).</text>
</comment>
<comment type="catalytic activity">
    <reaction evidence="7">
        <text>festuclavine + NAD(+) = 6,8-dimethyl-6,7-didehydroergoline + NADH + H(+)</text>
        <dbReference type="Rhea" id="RHEA:34055"/>
        <dbReference type="ChEBI" id="CHEBI:15378"/>
        <dbReference type="ChEBI" id="CHEBI:57540"/>
        <dbReference type="ChEBI" id="CHEBI:57945"/>
        <dbReference type="ChEBI" id="CHEBI:65034"/>
        <dbReference type="ChEBI" id="CHEBI:65045"/>
        <dbReference type="EC" id="1.5.1.44"/>
    </reaction>
</comment>
<comment type="pathway">
    <text evidence="7">Alkaloid biosynthesis; ergot alkaloid biosynthesis.</text>
</comment>
<comment type="induction">
    <text evidence="4">The expression of the ergot alkaloid synthesis cluster which leads to the synthesis of fumigaclavines is positively regulated by the brlA and stuA transcription factors (PubMed:19028996).</text>
</comment>
<comment type="biotechnology">
    <text evidence="14">Ergot alkaloids are known for their toxic effects on humans who consume contaminated grains or livestock that graze on grasses harboring ergot alkaloid-producing fungi (PubMed:19523108). Due to their strong affinity for monoamine neurotransmitter receptors they may also have clinical uses such as treatment of migraines, Parkinson's disease and cerebrovascular insufficiency (PubMed:19523108).</text>
</comment>
<comment type="similarity">
    <text evidence="13">Belongs to the fgaFS/easG family.</text>
</comment>
<sequence length="290" mass="32109">MTILVLGGRGKTASRLSLLLDNAGVPFLVGSSSTSYVGPYKMTHFDWLNEDTWTNVFLRASLDGIDPISAVYLVGGHAPELVDPGIRFINVARAQGVNRFVLLSASNIAKGTHSMGILHAHLDSLEDVQYVVLRPTWFMENLLEDPHVSWIKKEDKIYSATGDGKIPFISADDIARVAFSVLTEWKSQRAQEYFVLGPELLSYDQVADILTTVLGRKITHVSLAEADLARLLRDDVGLPPDFAAMLASMETDVKHGTEVRNSHDVKKVTGSLPCSFLDFAEQEKARWMRH</sequence>
<name>EASG_ASPFU</name>
<keyword id="KW-0017">Alkaloid metabolism</keyword>
<keyword id="KW-0520">NAD</keyword>
<keyword id="KW-0560">Oxidoreductase</keyword>
<keyword id="KW-1185">Reference proteome</keyword>
<reference key="1">
    <citation type="journal article" date="2005" name="Nature">
        <title>Genomic sequence of the pathogenic and allergenic filamentous fungus Aspergillus fumigatus.</title>
        <authorList>
            <person name="Nierman W.C."/>
            <person name="Pain A."/>
            <person name="Anderson M.J."/>
            <person name="Wortman J.R."/>
            <person name="Kim H.S."/>
            <person name="Arroyo J."/>
            <person name="Berriman M."/>
            <person name="Abe K."/>
            <person name="Archer D.B."/>
            <person name="Bermejo C."/>
            <person name="Bennett J.W."/>
            <person name="Bowyer P."/>
            <person name="Chen D."/>
            <person name="Collins M."/>
            <person name="Coulsen R."/>
            <person name="Davies R."/>
            <person name="Dyer P.S."/>
            <person name="Farman M.L."/>
            <person name="Fedorova N."/>
            <person name="Fedorova N.D."/>
            <person name="Feldblyum T.V."/>
            <person name="Fischer R."/>
            <person name="Fosker N."/>
            <person name="Fraser A."/>
            <person name="Garcia J.L."/>
            <person name="Garcia M.J."/>
            <person name="Goble A."/>
            <person name="Goldman G.H."/>
            <person name="Gomi K."/>
            <person name="Griffith-Jones S."/>
            <person name="Gwilliam R."/>
            <person name="Haas B.J."/>
            <person name="Haas H."/>
            <person name="Harris D.E."/>
            <person name="Horiuchi H."/>
            <person name="Huang J."/>
            <person name="Humphray S."/>
            <person name="Jimenez J."/>
            <person name="Keller N."/>
            <person name="Khouri H."/>
            <person name="Kitamoto K."/>
            <person name="Kobayashi T."/>
            <person name="Konzack S."/>
            <person name="Kulkarni R."/>
            <person name="Kumagai T."/>
            <person name="Lafton A."/>
            <person name="Latge J.-P."/>
            <person name="Li W."/>
            <person name="Lord A."/>
            <person name="Lu C."/>
            <person name="Majoros W.H."/>
            <person name="May G.S."/>
            <person name="Miller B.L."/>
            <person name="Mohamoud Y."/>
            <person name="Molina M."/>
            <person name="Monod M."/>
            <person name="Mouyna I."/>
            <person name="Mulligan S."/>
            <person name="Murphy L.D."/>
            <person name="O'Neil S."/>
            <person name="Paulsen I."/>
            <person name="Penalva M.A."/>
            <person name="Pertea M."/>
            <person name="Price C."/>
            <person name="Pritchard B.L."/>
            <person name="Quail M.A."/>
            <person name="Rabbinowitsch E."/>
            <person name="Rawlins N."/>
            <person name="Rajandream M.A."/>
            <person name="Reichard U."/>
            <person name="Renauld H."/>
            <person name="Robson G.D."/>
            <person name="Rodriguez de Cordoba S."/>
            <person name="Rodriguez-Pena J.M."/>
            <person name="Ronning C.M."/>
            <person name="Rutter S."/>
            <person name="Salzberg S.L."/>
            <person name="Sanchez M."/>
            <person name="Sanchez-Ferrero J.C."/>
            <person name="Saunders D."/>
            <person name="Seeger K."/>
            <person name="Squares R."/>
            <person name="Squares S."/>
            <person name="Takeuchi M."/>
            <person name="Tekaia F."/>
            <person name="Turner G."/>
            <person name="Vazquez de Aldana C.R."/>
            <person name="Weidman J."/>
            <person name="White O."/>
            <person name="Woodward J.R."/>
            <person name="Yu J.-H."/>
            <person name="Fraser C.M."/>
            <person name="Galagan J.E."/>
            <person name="Asai K."/>
            <person name="Machida M."/>
            <person name="Hall N."/>
            <person name="Barrell B.G."/>
            <person name="Denning D.W."/>
        </authorList>
    </citation>
    <scope>NUCLEOTIDE SEQUENCE [LARGE SCALE GENOMIC DNA]</scope>
    <source>
        <strain>ATCC MYA-4609 / CBS 101355 / FGSC A1100 / Af293</strain>
    </source>
</reference>
<reference key="2">
    <citation type="journal article" date="2005" name="Appl. Environ. Microbiol.">
        <title>An ergot alkaloid biosynthesis gene and clustered hypothetical genes from Aspergillus fumigatus.</title>
        <authorList>
            <person name="Coyle C.M."/>
            <person name="Panaccione D.G."/>
        </authorList>
    </citation>
    <scope>IDENTIFICATION</scope>
    <scope>FUNCTION</scope>
</reference>
<reference key="3">
    <citation type="journal article" date="2005" name="Microbiology">
        <title>Overproduction, purification and characterization of FgaPT2, a dimethylallyltryptophan synthase from Aspergillus fumigatus.</title>
        <authorList>
            <person name="Unsoeld I.A."/>
            <person name="Li S.-M."/>
        </authorList>
    </citation>
    <scope>FUNCTION</scope>
</reference>
<reference key="4">
    <citation type="journal article" date="2009" name="ChemBioChem">
        <title>Ergot alkaloid biosynthesis in Aspergillus fumigatus: FgaAT catalyses the acetylation of fumigaclavine B.</title>
        <authorList>
            <person name="Liu X."/>
            <person name="Wang L."/>
            <person name="Steffan N."/>
            <person name="Yin W.B."/>
            <person name="Li S.M."/>
        </authorList>
    </citation>
    <scope>FUNCTION</scope>
</reference>
<reference key="5">
    <citation type="journal article" date="2009" name="Eukaryot. Cell">
        <title>Transcriptional profiling identifies a role for BrlA in the response to nitrogen depletion and for StuA in the regulation of secondary metabolite clusters in Aspergillus fumigatus.</title>
        <authorList>
            <person name="Twumasi-Boateng K."/>
            <person name="Yu Y."/>
            <person name="Chen D."/>
            <person name="Gravelat F.N."/>
            <person name="Nierman W.C."/>
            <person name="Sheppard D.C."/>
        </authorList>
    </citation>
    <scope>INDUCTION</scope>
</reference>
<reference key="6">
    <citation type="journal article" date="2009" name="Mol. Plant Pathol.">
        <title>Ergot: from witchcraft to biotechnology.</title>
        <authorList>
            <person name="Haarmann T."/>
            <person name="Rolke Y."/>
            <person name="Giesbert S."/>
            <person name="Tudzynski P."/>
        </authorList>
    </citation>
    <scope>BIOTECHNOLOGY</scope>
</reference>
<reference key="7">
    <citation type="journal article" date="2010" name="Arch. Microbiol.">
        <title>Ergot alkaloid biosynthesis in Aspergillus fumigatus: conversion of chanoclavine-I to chanoclavine-I aldehyde catalyzed by a short-chain alcohol dehydrogenase FgaDH.</title>
        <authorList>
            <person name="Wallwey C."/>
            <person name="Matuschek M."/>
            <person name="Li S.M."/>
        </authorList>
    </citation>
    <scope>FUNCTION</scope>
</reference>
<reference key="8">
    <citation type="journal article" date="2010" name="Org. Biomol. Chem.">
        <title>Ergot alkaloid biosynthesis in Aspergillus fumigatus: Conversion of chanoclavine-I aldehyde to festuclavine by the festuclavine synthase FgaFS in the presence of the old yellow enzyme FgaOx3.</title>
        <authorList>
            <person name="Wallwey C."/>
            <person name="Matuschek M."/>
            <person name="Xie X.L."/>
            <person name="Li S.M."/>
        </authorList>
    </citation>
    <scope>FUNCTION</scope>
    <scope>CATALYTIC ACTIVITY</scope>
    <scope>PATHWAY</scope>
    <scope>NOMENCLATURE</scope>
    <source>
        <strain>NIH 5233 / ATCC 13073</strain>
    </source>
</reference>
<reference key="9">
    <citation type="journal article" date="2011" name="Curr. Genet.">
        <title>Ergot cluster-encoded catalase is required for synthesis of chanoclavine-I in Aspergillus fumigatus.</title>
        <authorList>
            <person name="Goetz K.E."/>
            <person name="Coyle C.M."/>
            <person name="Cheng J.Z."/>
            <person name="O'Connor S.E."/>
            <person name="Panaccione D.G."/>
        </authorList>
    </citation>
    <scope>FUNCTION</scope>
</reference>
<reference key="10">
    <citation type="journal article" date="2012" name="Mycologia">
        <title>Chemotypic and genotypic diversity in the ergot alkaloid pathway of Aspergillus fumigatus.</title>
        <authorList>
            <person name="Robinson S.L."/>
            <person name="Panaccione D.G."/>
        </authorList>
    </citation>
    <scope>IDENTIFICATION</scope>
    <scope>NOMENCLATURE</scope>
    <scope>FUNCTION</scope>
</reference>
<reference key="11">
    <citation type="journal article" date="2016" name="Curr. Genet.">
        <title>Functional analysis of the gene controlling hydroxylation of festuclavine in the ergot alkaloid pathway of Neosartorya fumigata.</title>
        <authorList>
            <person name="Bilovol Y."/>
            <person name="Panaccione D.G."/>
        </authorList>
    </citation>
    <scope>FUNCTION</scope>
</reference>
<evidence type="ECO:0000250" key="1">
    <source>
        <dbReference type="UniProtKB" id="B6D5I7"/>
    </source>
</evidence>
<evidence type="ECO:0000269" key="2">
    <source>
    </source>
</evidence>
<evidence type="ECO:0000269" key="3">
    <source>
    </source>
</evidence>
<evidence type="ECO:0000269" key="4">
    <source>
    </source>
</evidence>
<evidence type="ECO:0000269" key="5">
    <source>
    </source>
</evidence>
<evidence type="ECO:0000269" key="6">
    <source>
    </source>
</evidence>
<evidence type="ECO:0000269" key="7">
    <source>
    </source>
</evidence>
<evidence type="ECO:0000269" key="8">
    <source>
    </source>
</evidence>
<evidence type="ECO:0000269" key="9">
    <source>
    </source>
</evidence>
<evidence type="ECO:0000269" key="10">
    <source>
    </source>
</evidence>
<evidence type="ECO:0000303" key="11">
    <source>
    </source>
</evidence>
<evidence type="ECO:0000303" key="12">
    <source>
    </source>
</evidence>
<evidence type="ECO:0000305" key="13"/>
<evidence type="ECO:0000305" key="14">
    <source>
    </source>
</evidence>
<proteinExistence type="evidence at protein level"/>
<gene>
    <name evidence="12" type="primary">easG</name>
    <name evidence="11" type="synonym">fgaFS</name>
    <name type="ORF">AFUA_2G17970</name>
</gene>
<protein>
    <recommendedName>
        <fullName evidence="13">Festuclavine dehydrogenase easG</fullName>
        <ecNumber evidence="7">1.5.1.44</ecNumber>
    </recommendedName>
    <alternativeName>
        <fullName evidence="12">Ergot alkaloid biosynthetic protein G</fullName>
    </alternativeName>
</protein>
<accession>Q4WZ69</accession>
<feature type="chain" id="PRO_0000421732" description="Festuclavine dehydrogenase easG">
    <location>
        <begin position="1"/>
        <end position="290"/>
    </location>
</feature>
<dbReference type="EC" id="1.5.1.44" evidence="7"/>
<dbReference type="EMBL" id="AAHF01000001">
    <property type="protein sequence ID" value="EAL94096.1"/>
    <property type="molecule type" value="Genomic_DNA"/>
</dbReference>
<dbReference type="RefSeq" id="XP_756134.1">
    <property type="nucleotide sequence ID" value="XM_751041.1"/>
</dbReference>
<dbReference type="SMR" id="Q4WZ69"/>
<dbReference type="STRING" id="330879.Q4WZ69"/>
<dbReference type="EnsemblFungi" id="EAL94096">
    <property type="protein sequence ID" value="EAL94096"/>
    <property type="gene ID" value="AFUA_2G17970"/>
</dbReference>
<dbReference type="GeneID" id="3512709"/>
<dbReference type="KEGG" id="afm:AFUA_2G17970"/>
<dbReference type="VEuPathDB" id="FungiDB:Afu2g17970"/>
<dbReference type="eggNOG" id="ENOG502RYYU">
    <property type="taxonomic scope" value="Eukaryota"/>
</dbReference>
<dbReference type="HOGENOM" id="CLU_007383_10_6_1"/>
<dbReference type="InParanoid" id="Q4WZ69"/>
<dbReference type="OMA" id="WTISRPG"/>
<dbReference type="OrthoDB" id="9997102at2759"/>
<dbReference type="BioCyc" id="MetaCyc:MONOMER-17451"/>
<dbReference type="UniPathway" id="UPA00327"/>
<dbReference type="Proteomes" id="UP000002530">
    <property type="component" value="Chromosome 2"/>
</dbReference>
<dbReference type="GO" id="GO:0016646">
    <property type="term" value="F:oxidoreductase activity, acting on the CH-NH group of donors, NAD or NADP as acceptor"/>
    <property type="evidence" value="ECO:0000304"/>
    <property type="project" value="UniProtKB"/>
</dbReference>
<dbReference type="GO" id="GO:0009821">
    <property type="term" value="P:alkaloid biosynthetic process"/>
    <property type="evidence" value="ECO:0000314"/>
    <property type="project" value="AspGD"/>
</dbReference>
<dbReference type="GO" id="GO:0035837">
    <property type="term" value="P:ergot alkaloid biosynthetic process"/>
    <property type="evidence" value="ECO:0000314"/>
    <property type="project" value="UniProtKB"/>
</dbReference>
<dbReference type="GO" id="GO:1900809">
    <property type="term" value="P:fumigaclavine C biosynthetic process"/>
    <property type="evidence" value="ECO:0000314"/>
    <property type="project" value="GO_Central"/>
</dbReference>
<dbReference type="CDD" id="cd05269">
    <property type="entry name" value="TMR_SDR_a"/>
    <property type="match status" value="1"/>
</dbReference>
<dbReference type="Gene3D" id="3.40.50.720">
    <property type="entry name" value="NAD(P)-binding Rossmann-like Domain"/>
    <property type="match status" value="1"/>
</dbReference>
<dbReference type="Gene3D" id="3.90.25.10">
    <property type="entry name" value="UDP-galactose 4-epimerase, domain 1"/>
    <property type="match status" value="1"/>
</dbReference>
<dbReference type="InterPro" id="IPR051604">
    <property type="entry name" value="Ergot_Alk_Oxidoreductase"/>
</dbReference>
<dbReference type="InterPro" id="IPR019901">
    <property type="entry name" value="Ergot_alkaloid_biosynthesis"/>
</dbReference>
<dbReference type="InterPro" id="IPR007110">
    <property type="entry name" value="Ig-like_dom"/>
</dbReference>
<dbReference type="InterPro" id="IPR036291">
    <property type="entry name" value="NAD(P)-bd_dom_sf"/>
</dbReference>
<dbReference type="NCBIfam" id="TIGR03649">
    <property type="entry name" value="ergot_EASG"/>
    <property type="match status" value="1"/>
</dbReference>
<dbReference type="PANTHER" id="PTHR43162">
    <property type="match status" value="1"/>
</dbReference>
<dbReference type="PANTHER" id="PTHR43162:SF1">
    <property type="entry name" value="PRESTALK A DIFFERENTIATION PROTEIN A"/>
    <property type="match status" value="1"/>
</dbReference>
<dbReference type="SUPFAM" id="SSF51735">
    <property type="entry name" value="NAD(P)-binding Rossmann-fold domains"/>
    <property type="match status" value="1"/>
</dbReference>
<dbReference type="PROSITE" id="PS50835">
    <property type="entry name" value="IG_LIKE"/>
    <property type="match status" value="1"/>
</dbReference>